<feature type="chain" id="PRO_1000165051" description="HTH-type transcriptional regulator MalT">
    <location>
        <begin position="1"/>
        <end position="901"/>
    </location>
</feature>
<feature type="domain" description="HTH luxR-type" evidence="1">
    <location>
        <begin position="829"/>
        <end position="894"/>
    </location>
</feature>
<feature type="DNA-binding region" description="H-T-H motif" evidence="1">
    <location>
        <begin position="853"/>
        <end position="872"/>
    </location>
</feature>
<feature type="binding site" evidence="1">
    <location>
        <begin position="39"/>
        <end position="46"/>
    </location>
    <ligand>
        <name>ATP</name>
        <dbReference type="ChEBI" id="CHEBI:30616"/>
    </ligand>
</feature>
<sequence>MLIPSKLSRPVRLDHTVVRERLLAKLSGANNFRLALITSPAGYGKTTLISQWAAGKNDIGWYSLDEGDNQQERFASYLIAAMQQATNGHCAICETMAQKRQYASLTSLFAQLFIELAEWHSPLYLVIDDYHLITNPVIHESMRFFIRHQPENLTLVVLSRNLPQLGIANLRVRDQLLEIGSQQLAFTHQEAKQFFDCRLSSPIEAAESSRICDDVSGWATALQLIALSARQNTHSAHKSARRLAGINASHLSDYLVDEVLDNVDLATRHFLLKSAILRSMNDALINRVTGEENGQMRLEEIERQGLFLQRMDDTGEWFCYHPLFGNFLRQRCQWELAAELPEIHRAAAESWMAQGFPSEAIHHALAAGDALMLRDILLNHAWSLFNHSELSLLEESLKALPWDSLLENPQLVLLQAWLMQSQHRYGEVNTLLARAEHEIKDIREGTMHAEFNALRAQVAINDGNPDEAERLAKLALEELPPGWFYSRIVATSVLGEVLHCKGELTRSLALMQQTEQMARQHDVWHYALWSLIQQSEILFAQGFLQTAWETQEKAFQLINEQHLEQLPMHEFLVRIRAQLLWAWARLDEAEASARSGIEVLSSYQPQQQLQCLAMLIQCSLARGDLDNARSQLNRLENLLGNGKYHSDWISNANKVRVIYWQMTGDKAAAANWLRHTAKPEFANNHFLQGQWRNIARAQILLGEFEPAEIVLEELNENARSLRLMSDLNRNLLLLNQLYWQAGRKSDAQRVLLDALKLANRTGFISHFVIEGEAMAQQLRQLIQLNTLPELEQHRAQRILREINQHHRHKFAHFDENFVERLLNHPEVPELIRTSPLTQREWQVLGLIYSGYSNEQIAGELEVAATTIKTHIRNLYQKLGVAHRQAAVQHAQKLLKMMGYGV</sequence>
<gene>
    <name evidence="1" type="primary">malT</name>
    <name type="ordered locus">E2348C_3663</name>
</gene>
<accession>B7UKC3</accession>
<protein>
    <recommendedName>
        <fullName evidence="1">HTH-type transcriptional regulator MalT</fullName>
    </recommendedName>
    <alternativeName>
        <fullName evidence="1">ATP-dependent transcriptional activator MalT</fullName>
    </alternativeName>
</protein>
<proteinExistence type="inferred from homology"/>
<name>MALT_ECO27</name>
<comment type="function">
    <text evidence="1">Positively regulates the transcription of the maltose regulon whose gene products are responsible for uptake and catabolism of malto-oligosaccharides. Specifically binds to the promoter region of its target genes, recognizing a short DNA motif called the MalT box.</text>
</comment>
<comment type="activity regulation">
    <text evidence="1">Activated by ATP and maltotriose, which are both required for DNA binding.</text>
</comment>
<comment type="subunit">
    <text evidence="1">Monomer in solution. Oligomerizes to an active state in the presence of the positive effectors ATP and maltotriose.</text>
</comment>
<comment type="similarity">
    <text evidence="1">Belongs to the MalT family.</text>
</comment>
<reference key="1">
    <citation type="journal article" date="2009" name="J. Bacteriol.">
        <title>Complete genome sequence and comparative genome analysis of enteropathogenic Escherichia coli O127:H6 strain E2348/69.</title>
        <authorList>
            <person name="Iguchi A."/>
            <person name="Thomson N.R."/>
            <person name="Ogura Y."/>
            <person name="Saunders D."/>
            <person name="Ooka T."/>
            <person name="Henderson I.R."/>
            <person name="Harris D."/>
            <person name="Asadulghani M."/>
            <person name="Kurokawa K."/>
            <person name="Dean P."/>
            <person name="Kenny B."/>
            <person name="Quail M.A."/>
            <person name="Thurston S."/>
            <person name="Dougan G."/>
            <person name="Hayashi T."/>
            <person name="Parkhill J."/>
            <person name="Frankel G."/>
        </authorList>
    </citation>
    <scope>NUCLEOTIDE SEQUENCE [LARGE SCALE GENOMIC DNA]</scope>
    <source>
        <strain>E2348/69 / EPEC</strain>
    </source>
</reference>
<organism>
    <name type="scientific">Escherichia coli O127:H6 (strain E2348/69 / EPEC)</name>
    <dbReference type="NCBI Taxonomy" id="574521"/>
    <lineage>
        <taxon>Bacteria</taxon>
        <taxon>Pseudomonadati</taxon>
        <taxon>Pseudomonadota</taxon>
        <taxon>Gammaproteobacteria</taxon>
        <taxon>Enterobacterales</taxon>
        <taxon>Enterobacteriaceae</taxon>
        <taxon>Escherichia</taxon>
    </lineage>
</organism>
<evidence type="ECO:0000255" key="1">
    <source>
        <dbReference type="HAMAP-Rule" id="MF_01247"/>
    </source>
</evidence>
<keyword id="KW-0010">Activator</keyword>
<keyword id="KW-0067">ATP-binding</keyword>
<keyword id="KW-0119">Carbohydrate metabolism</keyword>
<keyword id="KW-0238">DNA-binding</keyword>
<keyword id="KW-0547">Nucleotide-binding</keyword>
<keyword id="KW-1185">Reference proteome</keyword>
<keyword id="KW-0804">Transcription</keyword>
<keyword id="KW-0805">Transcription regulation</keyword>
<dbReference type="EMBL" id="FM180568">
    <property type="protein sequence ID" value="CAS11211.1"/>
    <property type="molecule type" value="Genomic_DNA"/>
</dbReference>
<dbReference type="RefSeq" id="WP_000906936.1">
    <property type="nucleotide sequence ID" value="NC_011601.1"/>
</dbReference>
<dbReference type="SMR" id="B7UKC3"/>
<dbReference type="KEGG" id="ecg:E2348C_3663"/>
<dbReference type="HOGENOM" id="CLU_006325_3_0_6"/>
<dbReference type="Proteomes" id="UP000008205">
    <property type="component" value="Chromosome"/>
</dbReference>
<dbReference type="GO" id="GO:0005524">
    <property type="term" value="F:ATP binding"/>
    <property type="evidence" value="ECO:0007669"/>
    <property type="project" value="UniProtKB-UniRule"/>
</dbReference>
<dbReference type="GO" id="GO:0003677">
    <property type="term" value="F:DNA binding"/>
    <property type="evidence" value="ECO:0007669"/>
    <property type="project" value="UniProtKB-KW"/>
</dbReference>
<dbReference type="GO" id="GO:0003700">
    <property type="term" value="F:DNA-binding transcription factor activity"/>
    <property type="evidence" value="ECO:0007669"/>
    <property type="project" value="UniProtKB-UniRule"/>
</dbReference>
<dbReference type="GO" id="GO:0045913">
    <property type="term" value="P:positive regulation of carbohydrate metabolic process"/>
    <property type="evidence" value="ECO:0007669"/>
    <property type="project" value="UniProtKB-UniRule"/>
</dbReference>
<dbReference type="GO" id="GO:0045893">
    <property type="term" value="P:positive regulation of DNA-templated transcription"/>
    <property type="evidence" value="ECO:0007669"/>
    <property type="project" value="UniProtKB-UniRule"/>
</dbReference>
<dbReference type="CDD" id="cd06170">
    <property type="entry name" value="LuxR_C_like"/>
    <property type="match status" value="1"/>
</dbReference>
<dbReference type="FunFam" id="1.10.10.10:FF:000115">
    <property type="entry name" value="HTH-type transcriptional regulator MalT"/>
    <property type="match status" value="1"/>
</dbReference>
<dbReference type="FunFam" id="1.25.40.10:FF:000086">
    <property type="entry name" value="HTH-type transcriptional regulator MalT"/>
    <property type="match status" value="1"/>
</dbReference>
<dbReference type="Gene3D" id="3.40.50.300">
    <property type="entry name" value="P-loop containing nucleotide triphosphate hydrolases"/>
    <property type="match status" value="1"/>
</dbReference>
<dbReference type="Gene3D" id="1.25.40.10">
    <property type="entry name" value="Tetratricopeptide repeat domain"/>
    <property type="match status" value="1"/>
</dbReference>
<dbReference type="Gene3D" id="1.10.10.10">
    <property type="entry name" value="Winged helix-like DNA-binding domain superfamily/Winged helix DNA-binding domain"/>
    <property type="match status" value="1"/>
</dbReference>
<dbReference type="HAMAP" id="MF_01247">
    <property type="entry name" value="HTH_type_MalT"/>
    <property type="match status" value="1"/>
</dbReference>
<dbReference type="InterPro" id="IPR027417">
    <property type="entry name" value="P-loop_NTPase"/>
</dbReference>
<dbReference type="InterPro" id="IPR016032">
    <property type="entry name" value="Sig_transdc_resp-reg_C-effctor"/>
</dbReference>
<dbReference type="InterPro" id="IPR011990">
    <property type="entry name" value="TPR-like_helical_dom_sf"/>
</dbReference>
<dbReference type="InterPro" id="IPR041617">
    <property type="entry name" value="TPR_MalT"/>
</dbReference>
<dbReference type="InterPro" id="IPR023768">
    <property type="entry name" value="Tscrpt_reg_HTH_MalT"/>
</dbReference>
<dbReference type="InterPro" id="IPR000792">
    <property type="entry name" value="Tscrpt_reg_LuxR_C"/>
</dbReference>
<dbReference type="InterPro" id="IPR036388">
    <property type="entry name" value="WH-like_DNA-bd_sf"/>
</dbReference>
<dbReference type="NCBIfam" id="NF003420">
    <property type="entry name" value="PRK04841.1"/>
    <property type="match status" value="1"/>
</dbReference>
<dbReference type="PANTHER" id="PTHR44688">
    <property type="entry name" value="DNA-BINDING TRANSCRIPTIONAL ACTIVATOR DEVR_DOSR"/>
    <property type="match status" value="1"/>
</dbReference>
<dbReference type="PANTHER" id="PTHR44688:SF16">
    <property type="entry name" value="DNA-BINDING TRANSCRIPTIONAL ACTIVATOR DEVR_DOSR"/>
    <property type="match status" value="1"/>
</dbReference>
<dbReference type="Pfam" id="PF00196">
    <property type="entry name" value="GerE"/>
    <property type="match status" value="1"/>
</dbReference>
<dbReference type="Pfam" id="PF17874">
    <property type="entry name" value="TPR_MalT"/>
    <property type="match status" value="1"/>
</dbReference>
<dbReference type="PRINTS" id="PR00038">
    <property type="entry name" value="HTHLUXR"/>
</dbReference>
<dbReference type="SMART" id="SM00421">
    <property type="entry name" value="HTH_LUXR"/>
    <property type="match status" value="1"/>
</dbReference>
<dbReference type="SUPFAM" id="SSF46894">
    <property type="entry name" value="C-terminal effector domain of the bipartite response regulators"/>
    <property type="match status" value="1"/>
</dbReference>
<dbReference type="SUPFAM" id="SSF52540">
    <property type="entry name" value="P-loop containing nucleoside triphosphate hydrolases"/>
    <property type="match status" value="1"/>
</dbReference>
<dbReference type="SUPFAM" id="SSF48452">
    <property type="entry name" value="TPR-like"/>
    <property type="match status" value="1"/>
</dbReference>
<dbReference type="PROSITE" id="PS00622">
    <property type="entry name" value="HTH_LUXR_1"/>
    <property type="match status" value="1"/>
</dbReference>
<dbReference type="PROSITE" id="PS50043">
    <property type="entry name" value="HTH_LUXR_2"/>
    <property type="match status" value="1"/>
</dbReference>